<accession>Q9Z856</accession>
<accession>Q7AIP4</accession>
<accession>Q7DEX0</accession>
<accession>Q7VPZ6</accession>
<proteinExistence type="inferred from homology"/>
<organism>
    <name type="scientific">Chlamydia pneumoniae</name>
    <name type="common">Chlamydophila pneumoniae</name>
    <dbReference type="NCBI Taxonomy" id="83558"/>
    <lineage>
        <taxon>Bacteria</taxon>
        <taxon>Pseudomonadati</taxon>
        <taxon>Chlamydiota</taxon>
        <taxon>Chlamydiia</taxon>
        <taxon>Chlamydiales</taxon>
        <taxon>Chlamydiaceae</taxon>
        <taxon>Chlamydia/Chlamydophila group</taxon>
        <taxon>Chlamydia</taxon>
    </lineage>
</organism>
<dbReference type="EC" id="2.6.1.83" evidence="1"/>
<dbReference type="EMBL" id="AE001363">
    <property type="protein sequence ID" value="AAD18635.1"/>
    <property type="molecule type" value="Genomic_DNA"/>
</dbReference>
<dbReference type="EMBL" id="AE002161">
    <property type="protein sequence ID" value="AAF73649.1"/>
    <property type="molecule type" value="Genomic_DNA"/>
</dbReference>
<dbReference type="EMBL" id="BA000008">
    <property type="protein sequence ID" value="BAA98701.1"/>
    <property type="molecule type" value="Genomic_DNA"/>
</dbReference>
<dbReference type="EMBL" id="AE009440">
    <property type="protein sequence ID" value="AAP98444.1"/>
    <property type="status" value="ALT_INIT"/>
    <property type="molecule type" value="Genomic_DNA"/>
</dbReference>
<dbReference type="PIR" id="C86552">
    <property type="entry name" value="C86552"/>
</dbReference>
<dbReference type="PIR" id="F72072">
    <property type="entry name" value="F72072"/>
</dbReference>
<dbReference type="RefSeq" id="NP_224691.1">
    <property type="nucleotide sequence ID" value="NC_000922.1"/>
</dbReference>
<dbReference type="RefSeq" id="WP_010883133.1">
    <property type="nucleotide sequence ID" value="NZ_LN847257.1"/>
</dbReference>
<dbReference type="SMR" id="Q9Z856"/>
<dbReference type="STRING" id="406984.CPK_ORF01011"/>
<dbReference type="GeneID" id="45050538"/>
<dbReference type="KEGG" id="cpa:CP_0259"/>
<dbReference type="KEGG" id="cpj:aspC"/>
<dbReference type="KEGG" id="cpn:CPn_0495"/>
<dbReference type="KEGG" id="cpt:CpB0515"/>
<dbReference type="PATRIC" id="fig|115713.3.peg.554"/>
<dbReference type="eggNOG" id="COG0436">
    <property type="taxonomic scope" value="Bacteria"/>
</dbReference>
<dbReference type="HOGENOM" id="CLU_051433_0_0_0"/>
<dbReference type="OrthoDB" id="9813612at2"/>
<dbReference type="UniPathway" id="UPA00034">
    <property type="reaction ID" value="UER00466"/>
</dbReference>
<dbReference type="Proteomes" id="UP000000583">
    <property type="component" value="Chromosome"/>
</dbReference>
<dbReference type="Proteomes" id="UP000000801">
    <property type="component" value="Chromosome"/>
</dbReference>
<dbReference type="GO" id="GO:0010285">
    <property type="term" value="F:L,L-diaminopimelate aminotransferase activity"/>
    <property type="evidence" value="ECO:0007669"/>
    <property type="project" value="UniProtKB-UniRule"/>
</dbReference>
<dbReference type="GO" id="GO:0030170">
    <property type="term" value="F:pyridoxal phosphate binding"/>
    <property type="evidence" value="ECO:0007669"/>
    <property type="project" value="UniProtKB-UniRule"/>
</dbReference>
<dbReference type="GO" id="GO:0033362">
    <property type="term" value="P:lysine biosynthetic process via diaminopimelate, diaminopimelate-aminotransferase pathway"/>
    <property type="evidence" value="ECO:0007669"/>
    <property type="project" value="UniProtKB-UniRule"/>
</dbReference>
<dbReference type="CDD" id="cd00609">
    <property type="entry name" value="AAT_like"/>
    <property type="match status" value="1"/>
</dbReference>
<dbReference type="FunFam" id="3.40.640.10:FF:000099">
    <property type="entry name" value="LL-diaminopimelate aminotransferase, chloroplastic"/>
    <property type="match status" value="1"/>
</dbReference>
<dbReference type="Gene3D" id="3.90.1150.10">
    <property type="entry name" value="Aspartate Aminotransferase, domain 1"/>
    <property type="match status" value="1"/>
</dbReference>
<dbReference type="Gene3D" id="3.40.640.10">
    <property type="entry name" value="Type I PLP-dependent aspartate aminotransferase-like (Major domain)"/>
    <property type="match status" value="1"/>
</dbReference>
<dbReference type="HAMAP" id="MF_01642">
    <property type="entry name" value="DapL_aminotrans_1"/>
    <property type="match status" value="1"/>
</dbReference>
<dbReference type="InterPro" id="IPR004839">
    <property type="entry name" value="Aminotransferase_I/II_large"/>
</dbReference>
<dbReference type="InterPro" id="IPR019942">
    <property type="entry name" value="DapL/ALD1"/>
</dbReference>
<dbReference type="InterPro" id="IPR004838">
    <property type="entry name" value="NHTrfase_class1_PyrdxlP-BS"/>
</dbReference>
<dbReference type="InterPro" id="IPR015424">
    <property type="entry name" value="PyrdxlP-dep_Trfase"/>
</dbReference>
<dbReference type="InterPro" id="IPR015421">
    <property type="entry name" value="PyrdxlP-dep_Trfase_major"/>
</dbReference>
<dbReference type="InterPro" id="IPR015422">
    <property type="entry name" value="PyrdxlP-dep_Trfase_small"/>
</dbReference>
<dbReference type="NCBIfam" id="TIGR03542">
    <property type="entry name" value="DAPAT_plant"/>
    <property type="match status" value="1"/>
</dbReference>
<dbReference type="PANTHER" id="PTHR43144">
    <property type="entry name" value="AMINOTRANSFERASE"/>
    <property type="match status" value="1"/>
</dbReference>
<dbReference type="Pfam" id="PF00155">
    <property type="entry name" value="Aminotran_1_2"/>
    <property type="match status" value="1"/>
</dbReference>
<dbReference type="SUPFAM" id="SSF53383">
    <property type="entry name" value="PLP-dependent transferases"/>
    <property type="match status" value="1"/>
</dbReference>
<dbReference type="PROSITE" id="PS00105">
    <property type="entry name" value="AA_TRANSFER_CLASS_1"/>
    <property type="match status" value="1"/>
</dbReference>
<evidence type="ECO:0000255" key="1">
    <source>
        <dbReference type="HAMAP-Rule" id="MF_01642"/>
    </source>
</evidence>
<evidence type="ECO:0000305" key="2"/>
<keyword id="KW-0032">Aminotransferase</keyword>
<keyword id="KW-0663">Pyridoxal phosphate</keyword>
<keyword id="KW-0808">Transferase</keyword>
<reference key="1">
    <citation type="journal article" date="1999" name="Nat. Genet.">
        <title>Comparative genomes of Chlamydia pneumoniae and C. trachomatis.</title>
        <authorList>
            <person name="Kalman S."/>
            <person name="Mitchell W.P."/>
            <person name="Marathe R."/>
            <person name="Lammel C.J."/>
            <person name="Fan J."/>
            <person name="Hyman R.W."/>
            <person name="Olinger L."/>
            <person name="Grimwood J."/>
            <person name="Davis R.W."/>
            <person name="Stephens R.S."/>
        </authorList>
    </citation>
    <scope>NUCLEOTIDE SEQUENCE [LARGE SCALE GENOMIC DNA]</scope>
    <source>
        <strain>CWL029</strain>
    </source>
</reference>
<reference key="2">
    <citation type="journal article" date="2000" name="Nucleic Acids Res.">
        <title>Genome sequences of Chlamydia trachomatis MoPn and Chlamydia pneumoniae AR39.</title>
        <authorList>
            <person name="Read T.D."/>
            <person name="Brunham R.C."/>
            <person name="Shen C."/>
            <person name="Gill S.R."/>
            <person name="Heidelberg J.F."/>
            <person name="White O."/>
            <person name="Hickey E.K."/>
            <person name="Peterson J.D."/>
            <person name="Utterback T.R."/>
            <person name="Berry K.J."/>
            <person name="Bass S."/>
            <person name="Linher K.D."/>
            <person name="Weidman J.F."/>
            <person name="Khouri H.M."/>
            <person name="Craven B."/>
            <person name="Bowman C."/>
            <person name="Dodson R.J."/>
            <person name="Gwinn M.L."/>
            <person name="Nelson W.C."/>
            <person name="DeBoy R.T."/>
            <person name="Kolonay J.F."/>
            <person name="McClarty G."/>
            <person name="Salzberg S.L."/>
            <person name="Eisen J.A."/>
            <person name="Fraser C.M."/>
        </authorList>
    </citation>
    <scope>NUCLEOTIDE SEQUENCE [LARGE SCALE GENOMIC DNA]</scope>
    <source>
        <strain>AR39</strain>
    </source>
</reference>
<reference key="3">
    <citation type="journal article" date="2000" name="Nucleic Acids Res.">
        <title>Comparison of whole genome sequences of Chlamydia pneumoniae J138 from Japan and CWL029 from USA.</title>
        <authorList>
            <person name="Shirai M."/>
            <person name="Hirakawa H."/>
            <person name="Kimoto M."/>
            <person name="Tabuchi M."/>
            <person name="Kishi F."/>
            <person name="Ouchi K."/>
            <person name="Shiba T."/>
            <person name="Ishii K."/>
            <person name="Hattori M."/>
            <person name="Kuhara S."/>
            <person name="Nakazawa T."/>
        </authorList>
    </citation>
    <scope>NUCLEOTIDE SEQUENCE [LARGE SCALE GENOMIC DNA]</scope>
    <source>
        <strain>J138</strain>
    </source>
</reference>
<reference key="4">
    <citation type="submission" date="2002-05" db="EMBL/GenBank/DDBJ databases">
        <title>The genome sequence of Chlamydia pneumoniae TW183 and comparison with other Chlamydia strains based on whole genome sequence analysis.</title>
        <authorList>
            <person name="Geng M.M."/>
            <person name="Schuhmacher A."/>
            <person name="Muehldorfer I."/>
            <person name="Bensch K.W."/>
            <person name="Schaefer K.P."/>
            <person name="Schneider S."/>
            <person name="Pohl T."/>
            <person name="Essig A."/>
            <person name="Marre R."/>
            <person name="Melchers K."/>
        </authorList>
    </citation>
    <scope>NUCLEOTIDE SEQUENCE [LARGE SCALE GENOMIC DNA]</scope>
    <source>
        <strain>TW-183</strain>
    </source>
</reference>
<name>DAPAT_CHLPN</name>
<protein>
    <recommendedName>
        <fullName evidence="1">LL-diaminopimelate aminotransferase</fullName>
        <shortName evidence="1">DAP-AT</shortName>
        <shortName evidence="1">DAP-aminotransferase</shortName>
        <shortName evidence="1">LL-DAP-aminotransferase</shortName>
        <ecNumber evidence="1">2.6.1.83</ecNumber>
    </recommendedName>
</protein>
<gene>
    <name evidence="1" type="primary">dapL</name>
    <name type="ordered locus">CPn_0495</name>
    <name type="ordered locus">CP_0259</name>
    <name type="ordered locus">CPj0495</name>
    <name type="ordered locus">CpB0515</name>
</gene>
<feature type="chain" id="PRO_0000342219" description="LL-diaminopimelate aminotransferase">
    <location>
        <begin position="1"/>
        <end position="397"/>
    </location>
</feature>
<feature type="binding site" evidence="1">
    <location>
        <position position="14"/>
    </location>
    <ligand>
        <name>substrate</name>
    </ligand>
</feature>
<feature type="binding site" evidence="1">
    <location>
        <position position="41"/>
    </location>
    <ligand>
        <name>substrate</name>
    </ligand>
</feature>
<feature type="binding site" evidence="1">
    <location>
        <position position="71"/>
    </location>
    <ligand>
        <name>pyridoxal 5'-phosphate</name>
        <dbReference type="ChEBI" id="CHEBI:597326"/>
    </ligand>
</feature>
<feature type="binding site" evidence="1">
    <location>
        <begin position="104"/>
        <end position="105"/>
    </location>
    <ligand>
        <name>pyridoxal 5'-phosphate</name>
        <dbReference type="ChEBI" id="CHEBI:597326"/>
    </ligand>
</feature>
<feature type="binding site" evidence="1">
    <location>
        <position position="105"/>
    </location>
    <ligand>
        <name>substrate</name>
    </ligand>
</feature>
<feature type="binding site" evidence="1">
    <location>
        <position position="128"/>
    </location>
    <ligand>
        <name>pyridoxal 5'-phosphate</name>
        <dbReference type="ChEBI" id="CHEBI:597326"/>
    </ligand>
</feature>
<feature type="binding site" evidence="1">
    <location>
        <position position="128"/>
    </location>
    <ligand>
        <name>substrate</name>
    </ligand>
</feature>
<feature type="binding site" evidence="1">
    <location>
        <position position="174"/>
    </location>
    <ligand>
        <name>pyridoxal 5'-phosphate</name>
        <dbReference type="ChEBI" id="CHEBI:597326"/>
    </ligand>
</feature>
<feature type="binding site" evidence="1">
    <location>
        <position position="174"/>
    </location>
    <ligand>
        <name>substrate</name>
    </ligand>
</feature>
<feature type="binding site" evidence="1">
    <location>
        <position position="205"/>
    </location>
    <ligand>
        <name>pyridoxal 5'-phosphate</name>
        <dbReference type="ChEBI" id="CHEBI:597326"/>
    </ligand>
</feature>
<feature type="binding site" evidence="1">
    <location>
        <begin position="233"/>
        <end position="235"/>
    </location>
    <ligand>
        <name>pyridoxal 5'-phosphate</name>
        <dbReference type="ChEBI" id="CHEBI:597326"/>
    </ligand>
</feature>
<feature type="binding site" evidence="1">
    <location>
        <position position="244"/>
    </location>
    <ligand>
        <name>pyridoxal 5'-phosphate</name>
        <dbReference type="ChEBI" id="CHEBI:597326"/>
    </ligand>
</feature>
<feature type="binding site" evidence="1">
    <location>
        <position position="275"/>
    </location>
    <ligand>
        <name>pyridoxal 5'-phosphate</name>
        <dbReference type="ChEBI" id="CHEBI:597326"/>
    </ligand>
</feature>
<feature type="binding site" evidence="1">
    <location>
        <position position="275"/>
    </location>
    <ligand>
        <name>substrate</name>
    </ligand>
</feature>
<feature type="binding site" evidence="1">
    <location>
        <position position="368"/>
    </location>
    <ligand>
        <name>substrate</name>
    </ligand>
</feature>
<feature type="modified residue" description="N6-(pyridoxal phosphate)lysine" evidence="1">
    <location>
        <position position="236"/>
    </location>
</feature>
<sequence>MRRNPHFSLLKPQYLFSEISKKLAQFRKENPEISVIDLSIGDTTQPLCRSITQAIKEFCVSQEKQETYRGYGPETGLEKLRTKIASEVYENRISPEEIFISDGAKPDIFRLFSFFGSEKTLGLQDPVYPAYRDIAHITGIRDIIPLACRKETGFIPELPNQQSLDILCLCYPNNPTGTVLTFQQLQALVNYANQHGTVLIFDAAYSAFVSDPSLPKSIFEIPEAKYCAIEINSFSKSLGFTGMRLAWNVIPKELTYDNNEPMINDWKRLFATTFNGASLLMQEAGYYGLDLFPTPPAISLYLTNAQKLKKSLETAGFSVHGGDHAPYLWVELPEGISDEEAFDFFLHQYHIAVTPGHGFGSCGQGFVRFSALTQPQNIALACDRLCTASLKETMVLA</sequence>
<comment type="function">
    <text evidence="1">Involved in the synthesis of meso-diaminopimelate (m-DAP or DL-DAP), required for both lysine and peptidoglycan biosynthesis. Catalyzes the direct conversion of tetrahydrodipicolinate to LL-diaminopimelate.</text>
</comment>
<comment type="catalytic activity">
    <reaction evidence="1">
        <text>(2S,6S)-2,6-diaminopimelate + 2-oxoglutarate = (S)-2,3,4,5-tetrahydrodipicolinate + L-glutamate + H2O + H(+)</text>
        <dbReference type="Rhea" id="RHEA:23988"/>
        <dbReference type="ChEBI" id="CHEBI:15377"/>
        <dbReference type="ChEBI" id="CHEBI:15378"/>
        <dbReference type="ChEBI" id="CHEBI:16810"/>
        <dbReference type="ChEBI" id="CHEBI:16845"/>
        <dbReference type="ChEBI" id="CHEBI:29985"/>
        <dbReference type="ChEBI" id="CHEBI:57609"/>
        <dbReference type="EC" id="2.6.1.83"/>
    </reaction>
</comment>
<comment type="cofactor">
    <cofactor evidence="1">
        <name>pyridoxal 5'-phosphate</name>
        <dbReference type="ChEBI" id="CHEBI:597326"/>
    </cofactor>
</comment>
<comment type="pathway">
    <text evidence="1">Amino-acid biosynthesis; L-lysine biosynthesis via DAP pathway; LL-2,6-diaminopimelate from (S)-tetrahydrodipicolinate (aminotransferase route): step 1/1.</text>
</comment>
<comment type="subunit">
    <text evidence="1">Homodimer.</text>
</comment>
<comment type="similarity">
    <text evidence="1">Belongs to the class-I pyridoxal-phosphate-dependent aminotransferase family. LL-diaminopimelate aminotransferase subfamily.</text>
</comment>
<comment type="sequence caution" evidence="2">
    <conflict type="erroneous initiation">
        <sequence resource="EMBL-CDS" id="AAP98444"/>
    </conflict>
</comment>